<evidence type="ECO:0000250" key="1">
    <source>
        <dbReference type="UniProtKB" id="Q9Y6Y0"/>
    </source>
</evidence>
<evidence type="ECO:0000255" key="2">
    <source>
        <dbReference type="PROSITE-ProRule" id="PRU00037"/>
    </source>
</evidence>
<evidence type="ECO:0000256" key="3">
    <source>
        <dbReference type="SAM" id="MobiDB-lite"/>
    </source>
</evidence>
<evidence type="ECO:0000269" key="4">
    <source>
    </source>
</evidence>
<evidence type="ECO:0000269" key="5">
    <source>
    </source>
</evidence>
<evidence type="ECO:0000269" key="6">
    <source>
    </source>
</evidence>
<evidence type="ECO:0000269" key="7">
    <source>
    </source>
</evidence>
<evidence type="ECO:0000269" key="8">
    <source>
    </source>
</evidence>
<evidence type="ECO:0000269" key="9">
    <source>
    </source>
</evidence>
<evidence type="ECO:0000303" key="10">
    <source>
    </source>
</evidence>
<evidence type="ECO:0000303" key="11">
    <source>
    </source>
</evidence>
<evidence type="ECO:0000303" key="12">
    <source>
    </source>
</evidence>
<evidence type="ECO:0000303" key="13">
    <source ref="2"/>
</evidence>
<evidence type="ECO:0000305" key="14"/>
<evidence type="ECO:0000312" key="15">
    <source>
        <dbReference type="MGI" id="MGI:2152389"/>
    </source>
</evidence>
<evidence type="ECO:0007744" key="16">
    <source>
    </source>
</evidence>
<proteinExistence type="evidence at protein level"/>
<dbReference type="EMBL" id="AB055737">
    <property type="protein sequence ID" value="BAB69058.1"/>
    <property type="molecule type" value="mRNA"/>
</dbReference>
<dbReference type="EMBL" id="AB055738">
    <property type="protein sequence ID" value="BAB69059.1"/>
    <property type="molecule type" value="mRNA"/>
</dbReference>
<dbReference type="EMBL" id="DQ914522">
    <property type="protein sequence ID" value="ABI84241.1"/>
    <property type="molecule type" value="mRNA"/>
</dbReference>
<dbReference type="EMBL" id="AK129229">
    <property type="protein sequence ID" value="BAC98039.1"/>
    <property type="status" value="ALT_INIT"/>
    <property type="molecule type" value="mRNA"/>
</dbReference>
<dbReference type="EMBL" id="AK007291">
    <property type="protein sequence ID" value="BAB24936.1"/>
    <property type="molecule type" value="mRNA"/>
</dbReference>
<dbReference type="EMBL" id="AK144835">
    <property type="protein sequence ID" value="BAE26089.1"/>
    <property type="molecule type" value="mRNA"/>
</dbReference>
<dbReference type="EMBL" id="AK145071">
    <property type="protein sequence ID" value="BAE26221.1"/>
    <property type="molecule type" value="mRNA"/>
</dbReference>
<dbReference type="EMBL" id="AK146001">
    <property type="protein sequence ID" value="BAE26822.1"/>
    <property type="molecule type" value="mRNA"/>
</dbReference>
<dbReference type="EMBL" id="AK146329">
    <property type="protein sequence ID" value="BAE27084.1"/>
    <property type="molecule type" value="mRNA"/>
</dbReference>
<dbReference type="EMBL" id="AK146494">
    <property type="protein sequence ID" value="BAE27212.1"/>
    <property type="molecule type" value="mRNA"/>
</dbReference>
<dbReference type="EMBL" id="AK146645">
    <property type="protein sequence ID" value="BAE27326.1"/>
    <property type="molecule type" value="mRNA"/>
</dbReference>
<dbReference type="EMBL" id="AK159254">
    <property type="protein sequence ID" value="BAE34935.1"/>
    <property type="molecule type" value="mRNA"/>
</dbReference>
<dbReference type="EMBL" id="BC004092">
    <property type="protein sequence ID" value="AAH04092.1"/>
    <property type="molecule type" value="mRNA"/>
</dbReference>
<dbReference type="EMBL" id="BC040250">
    <property type="protein sequence ID" value="AAH40250.1"/>
    <property type="molecule type" value="mRNA"/>
</dbReference>
<dbReference type="CCDS" id="CCDS15358.1">
    <molecule id="Q920Q8-4"/>
</dbReference>
<dbReference type="CCDS" id="CCDS15359.1">
    <molecule id="Q920Q8-1"/>
</dbReference>
<dbReference type="CCDS" id="CCDS35735.1">
    <molecule id="Q920Q8-2"/>
</dbReference>
<dbReference type="RefSeq" id="NP_001034600.1">
    <molecule id="Q920Q8-2"/>
    <property type="nucleotide sequence ID" value="NM_001039511.1"/>
</dbReference>
<dbReference type="RefSeq" id="NP_001034601.1">
    <molecule id="Q920Q8-4"/>
    <property type="nucleotide sequence ID" value="NM_001039512.1"/>
</dbReference>
<dbReference type="RefSeq" id="NP_473443.2">
    <molecule id="Q920Q8-1"/>
    <property type="nucleotide sequence ID" value="NM_054102.2"/>
</dbReference>
<dbReference type="SMR" id="Q920Q8"/>
<dbReference type="BioGRID" id="228184">
    <property type="interactions" value="28"/>
</dbReference>
<dbReference type="FunCoup" id="Q920Q8">
    <property type="interactions" value="3644"/>
</dbReference>
<dbReference type="IntAct" id="Q920Q8">
    <property type="interactions" value="8"/>
</dbReference>
<dbReference type="MINT" id="Q920Q8"/>
<dbReference type="STRING" id="10090.ENSMUSP00000023918"/>
<dbReference type="iPTMnet" id="Q920Q8"/>
<dbReference type="PhosphoSitePlus" id="Q920Q8"/>
<dbReference type="SwissPalm" id="Q920Q8"/>
<dbReference type="jPOST" id="Q920Q8"/>
<dbReference type="PaxDb" id="10090-ENSMUSP00000023918"/>
<dbReference type="PeptideAtlas" id="Q920Q8"/>
<dbReference type="ProteomicsDB" id="294052">
    <molecule id="Q920Q8-1"/>
</dbReference>
<dbReference type="ProteomicsDB" id="294053">
    <molecule id="Q920Q8-2"/>
</dbReference>
<dbReference type="ProteomicsDB" id="294054">
    <molecule id="Q920Q8-3"/>
</dbReference>
<dbReference type="ProteomicsDB" id="294055">
    <molecule id="Q920Q8-4"/>
</dbReference>
<dbReference type="Pumba" id="Q920Q8"/>
<dbReference type="Antibodypedia" id="1274">
    <property type="antibodies" value="122 antibodies from 26 providers"/>
</dbReference>
<dbReference type="DNASU" id="117198"/>
<dbReference type="Ensembl" id="ENSMUST00000023918.13">
    <molecule id="Q920Q8-1"/>
    <property type="protein sequence ID" value="ENSMUSP00000023918.7"/>
    <property type="gene ID" value="ENSMUSG00000023150.15"/>
</dbReference>
<dbReference type="Ensembl" id="ENSMUST00000097543.8">
    <molecule id="Q920Q8-4"/>
    <property type="protein sequence ID" value="ENSMUSP00000095150.2"/>
    <property type="gene ID" value="ENSMUSG00000023150.15"/>
</dbReference>
<dbReference type="Ensembl" id="ENSMUST00000111887.10">
    <molecule id="Q920Q8-2"/>
    <property type="protein sequence ID" value="ENSMUSP00000107518.4"/>
    <property type="gene ID" value="ENSMUSG00000023150.15"/>
</dbReference>
<dbReference type="Ensembl" id="ENSMUST00000186745.2">
    <molecule id="Q920Q8-2"/>
    <property type="protein sequence ID" value="ENSMUSP00000140708.2"/>
    <property type="gene ID" value="ENSMUSG00000023150.15"/>
</dbReference>
<dbReference type="GeneID" id="117198"/>
<dbReference type="KEGG" id="mmu:117198"/>
<dbReference type="UCSC" id="uc007cym.1">
    <molecule id="Q920Q8-2"/>
    <property type="organism name" value="mouse"/>
</dbReference>
<dbReference type="UCSC" id="uc007cyn.1">
    <molecule id="Q920Q8-1"/>
    <property type="organism name" value="mouse"/>
</dbReference>
<dbReference type="UCSC" id="uc007cyo.1">
    <molecule id="Q920Q8-4"/>
    <property type="organism name" value="mouse"/>
</dbReference>
<dbReference type="AGR" id="MGI:2152389"/>
<dbReference type="CTD" id="10625"/>
<dbReference type="MGI" id="MGI:2152389">
    <property type="gene designation" value="Ivns1abp"/>
</dbReference>
<dbReference type="VEuPathDB" id="HostDB:ENSMUSG00000023150"/>
<dbReference type="eggNOG" id="KOG4441">
    <property type="taxonomic scope" value="Eukaryota"/>
</dbReference>
<dbReference type="GeneTree" id="ENSGT00940000155635"/>
<dbReference type="HOGENOM" id="CLU_004253_11_0_1"/>
<dbReference type="InParanoid" id="Q920Q8"/>
<dbReference type="OMA" id="TEIVQDY"/>
<dbReference type="OrthoDB" id="45365at2759"/>
<dbReference type="PhylomeDB" id="Q920Q8"/>
<dbReference type="TreeFam" id="TF329218"/>
<dbReference type="BioGRID-ORCS" id="117198">
    <property type="hits" value="3 hits in 79 CRISPR screens"/>
</dbReference>
<dbReference type="ChiTaRS" id="Ivns1abp">
    <property type="organism name" value="mouse"/>
</dbReference>
<dbReference type="PRO" id="PR:Q920Q8"/>
<dbReference type="Proteomes" id="UP000000589">
    <property type="component" value="Chromosome 1"/>
</dbReference>
<dbReference type="RNAct" id="Q920Q8">
    <property type="molecule type" value="protein"/>
</dbReference>
<dbReference type="Bgee" id="ENSMUSG00000023150">
    <property type="expression patterns" value="Expressed in metanephric cortical collecting duct and 306 other cell types or tissues"/>
</dbReference>
<dbReference type="ExpressionAtlas" id="Q920Q8">
    <property type="expression patterns" value="baseline and differential"/>
</dbReference>
<dbReference type="GO" id="GO:0005856">
    <property type="term" value="C:cytoskeleton"/>
    <property type="evidence" value="ECO:0007669"/>
    <property type="project" value="UniProtKB-SubCell"/>
</dbReference>
<dbReference type="GO" id="GO:0005829">
    <property type="term" value="C:cytosol"/>
    <property type="evidence" value="ECO:0007669"/>
    <property type="project" value="Ensembl"/>
</dbReference>
<dbReference type="GO" id="GO:0005634">
    <property type="term" value="C:nucleus"/>
    <property type="evidence" value="ECO:0000314"/>
    <property type="project" value="MGI"/>
</dbReference>
<dbReference type="GO" id="GO:0097193">
    <property type="term" value="P:intrinsic apoptotic signaling pathway"/>
    <property type="evidence" value="ECO:0000315"/>
    <property type="project" value="MGI"/>
</dbReference>
<dbReference type="GO" id="GO:0006397">
    <property type="term" value="P:mRNA processing"/>
    <property type="evidence" value="ECO:0007669"/>
    <property type="project" value="UniProtKB-KW"/>
</dbReference>
<dbReference type="GO" id="GO:2001243">
    <property type="term" value="P:negative regulation of intrinsic apoptotic signaling pathway"/>
    <property type="evidence" value="ECO:0000315"/>
    <property type="project" value="MGI"/>
</dbReference>
<dbReference type="GO" id="GO:0031397">
    <property type="term" value="P:negative regulation of protein ubiquitination"/>
    <property type="evidence" value="ECO:0000250"/>
    <property type="project" value="UniProtKB"/>
</dbReference>
<dbReference type="GO" id="GO:0009615">
    <property type="term" value="P:response to virus"/>
    <property type="evidence" value="ECO:0007669"/>
    <property type="project" value="Ensembl"/>
</dbReference>
<dbReference type="GO" id="GO:0008380">
    <property type="term" value="P:RNA splicing"/>
    <property type="evidence" value="ECO:0007669"/>
    <property type="project" value="UniProtKB-KW"/>
</dbReference>
<dbReference type="CDD" id="cd18502">
    <property type="entry name" value="BACK_NS1BP_IVNS1ABP"/>
    <property type="match status" value="1"/>
</dbReference>
<dbReference type="CDD" id="cd18306">
    <property type="entry name" value="BTB_POZ_NS1BP"/>
    <property type="match status" value="1"/>
</dbReference>
<dbReference type="FunFam" id="2.120.10.80:FF:000039">
    <property type="entry name" value="influenza virus NS1A-binding protein"/>
    <property type="match status" value="1"/>
</dbReference>
<dbReference type="FunFam" id="1.25.40.420:FF:000017">
    <property type="entry name" value="Influenza virus NS1A-binding protein-like protein"/>
    <property type="match status" value="1"/>
</dbReference>
<dbReference type="FunFam" id="2.120.10.80:FF:000027">
    <property type="entry name" value="Influenza virus NS1A-binding protein-like protein"/>
    <property type="match status" value="1"/>
</dbReference>
<dbReference type="FunFam" id="3.30.710.10:FF:000068">
    <property type="entry name" value="Influenza virus NS1A-binding protein-like protein"/>
    <property type="match status" value="1"/>
</dbReference>
<dbReference type="Gene3D" id="1.25.40.420">
    <property type="match status" value="1"/>
</dbReference>
<dbReference type="Gene3D" id="2.120.10.80">
    <property type="entry name" value="Kelch-type beta propeller"/>
    <property type="match status" value="2"/>
</dbReference>
<dbReference type="Gene3D" id="3.30.710.10">
    <property type="entry name" value="Potassium Channel Kv1.1, Chain A"/>
    <property type="match status" value="1"/>
</dbReference>
<dbReference type="InterPro" id="IPR011705">
    <property type="entry name" value="BACK"/>
</dbReference>
<dbReference type="InterPro" id="IPR017096">
    <property type="entry name" value="BTB-kelch_protein"/>
</dbReference>
<dbReference type="InterPro" id="IPR000210">
    <property type="entry name" value="BTB/POZ_dom"/>
</dbReference>
<dbReference type="InterPro" id="IPR015915">
    <property type="entry name" value="Kelch-typ_b-propeller"/>
</dbReference>
<dbReference type="InterPro" id="IPR006652">
    <property type="entry name" value="Kelch_1"/>
</dbReference>
<dbReference type="InterPro" id="IPR011333">
    <property type="entry name" value="SKP1/BTB/POZ_sf"/>
</dbReference>
<dbReference type="PANTHER" id="PTHR24412:SF396">
    <property type="entry name" value="INFLUENZA VIRUS NS1A-BINDING PROTEIN"/>
    <property type="match status" value="1"/>
</dbReference>
<dbReference type="PANTHER" id="PTHR24412">
    <property type="entry name" value="KELCH PROTEIN"/>
    <property type="match status" value="1"/>
</dbReference>
<dbReference type="Pfam" id="PF07707">
    <property type="entry name" value="BACK"/>
    <property type="match status" value="1"/>
</dbReference>
<dbReference type="Pfam" id="PF00651">
    <property type="entry name" value="BTB"/>
    <property type="match status" value="1"/>
</dbReference>
<dbReference type="Pfam" id="PF01344">
    <property type="entry name" value="Kelch_1"/>
    <property type="match status" value="2"/>
</dbReference>
<dbReference type="Pfam" id="PF24681">
    <property type="entry name" value="Kelch_KLHDC2_KLHL20_DRC7"/>
    <property type="match status" value="1"/>
</dbReference>
<dbReference type="PIRSF" id="PIRSF037037">
    <property type="entry name" value="Kelch-like_protein_gigaxonin"/>
    <property type="match status" value="1"/>
</dbReference>
<dbReference type="SMART" id="SM00875">
    <property type="entry name" value="BACK"/>
    <property type="match status" value="1"/>
</dbReference>
<dbReference type="SMART" id="SM00225">
    <property type="entry name" value="BTB"/>
    <property type="match status" value="1"/>
</dbReference>
<dbReference type="SMART" id="SM00612">
    <property type="entry name" value="Kelch"/>
    <property type="match status" value="6"/>
</dbReference>
<dbReference type="SUPFAM" id="SSF117281">
    <property type="entry name" value="Kelch motif"/>
    <property type="match status" value="1"/>
</dbReference>
<dbReference type="SUPFAM" id="SSF54695">
    <property type="entry name" value="POZ domain"/>
    <property type="match status" value="1"/>
</dbReference>
<dbReference type="PROSITE" id="PS50097">
    <property type="entry name" value="BTB"/>
    <property type="match status" value="1"/>
</dbReference>
<name>NS1BP_MOUSE</name>
<accession>Q920Q8</accession>
<accession>Q06BK6</accession>
<accession>Q3TXI1</accession>
<accession>Q3UJE3</accession>
<accession>Q3UJS1</accession>
<accession>Q3UKH9</accession>
<accession>Q3UMK9</accession>
<accession>Q6ZQ34</accession>
<accession>Q99KN0</accession>
<accession>Q9D978</accession>
<keyword id="KW-0025">Alternative splicing</keyword>
<keyword id="KW-0963">Cytoplasm</keyword>
<keyword id="KW-0206">Cytoskeleton</keyword>
<keyword id="KW-0880">Kelch repeat</keyword>
<keyword id="KW-0507">mRNA processing</keyword>
<keyword id="KW-0508">mRNA splicing</keyword>
<keyword id="KW-0539">Nucleus</keyword>
<keyword id="KW-0597">Phosphoprotein</keyword>
<keyword id="KW-1185">Reference proteome</keyword>
<keyword id="KW-0677">Repeat</keyword>
<comment type="function">
    <text evidence="1 4 7 8">Involved in many cell functions, including pre-mRNA splicing, the aryl hydrocarbon receptor (AHR) pathway, F-actin organization and protein ubiquitination. Plays a role in the dynamic organization of the actin skeleton as a stabilizer of actin filaments by association with F-actin through Kelch repeats (PubMed:12213805, PubMed:16317045). Protects cells from cell death induced by actin destabilization (PubMed:16952015). Functions as a modifier of the AHR/Aryl hydrocarbon receptor pathway increasing the concentration of AHR available to activate transcription (By similarity). In addition, functions as a negative regulator of BCR(KLHL20) E3 ubiquitin ligase complex to prevent ubiquitin-mediated proteolysis of PML and DAPK1, two tumor suppressors (By similarity). Inhibits pre-mRNA splicing (in vitro) (By similarity). May play a role in mRNA nuclear export (By similarity).</text>
</comment>
<comment type="function">
    <molecule>Isoform 2</molecule>
    <text evidence="6">May play a role in cell cycle progression in the nucleus.</text>
</comment>
<comment type="subunit">
    <text evidence="1">Homodimer; through the BTB domain (By similarity). Interacts with AHR/Aryl hydrocarbon receptor (By similarity). Interacts (via BACK domain) with pre-mRNA-binding protein HNRNPK; the interaction is direct (By similarity). Interacts (via BACK domain) with splicing factor PTBP1; the interaction is direct (By similarity). Interacts (via Kelch repeats) with RNA polymerase POLR2A (via C-terminal domain) (By similarity). Interacts (via BACK domain) with splicing factor SNRPA; the interaction is indirect (By similarity). Interacts (via Kelch repeats) with splicing factor SART1 (By similarity). Interacts (via BACK domain) with ALYREF; the interaction is indirect and likely plays a role in mRNA nuclear export (By similarity). Interacts (via Kelch repeats) with KLHL20 (via Kelch repeats); this interaction blocks the assembly of Cul3-KLHL20 complex (By similarity).</text>
</comment>
<comment type="subcellular location">
    <molecule>Isoform 1</molecule>
    <subcellularLocation>
        <location>Cytoplasm</location>
    </subcellularLocation>
    <subcellularLocation>
        <location evidence="4">Cytoplasm</location>
        <location evidence="4">Cytoskeleton</location>
    </subcellularLocation>
    <text evidence="4">Associated with actin filaments.</text>
</comment>
<comment type="subcellular location">
    <molecule>Isoform 2</molecule>
    <subcellularLocation>
        <location evidence="6">Nucleus</location>
    </subcellularLocation>
    <text evidence="6">Not associated with actin filaments.</text>
</comment>
<comment type="alternative products">
    <event type="alternative splicing"/>
    <isoform>
        <id>Q920Q8-1</id>
        <name>1</name>
        <name>Nd1-L</name>
        <sequence type="displayed"/>
    </isoform>
    <isoform>
        <id>Q920Q8-2</id>
        <name>2</name>
        <name>Nd1-S</name>
        <sequence type="described" ref="VSP_024812 VSP_024813"/>
    </isoform>
    <isoform>
        <id>Q920Q8-3</id>
        <name>3</name>
        <name>Nd1-L2</name>
        <sequence type="described" ref="VSP_024811"/>
    </isoform>
    <isoform>
        <id>Q920Q8-4</id>
        <name>4</name>
        <sequence type="described" ref="VSP_024810"/>
    </isoform>
</comment>
<comment type="tissue specificity">
    <text evidence="4 6 7">Ubiquitous expression. In the heart, the highest expression is detected in the ventricles and the lowest in the atria. Expressed in dendrites and spines in neurons.</text>
</comment>
<comment type="developmental stage">
    <text evidence="8">Barely detected in the heart at 15.5 dpc, but clearly expressed in newborn heart with increased amount up to 8 weeks of age.</text>
</comment>
<comment type="induction">
    <text evidence="8 9">Decreased expression in various organs and cultured cell lines by doxorubicin treatment which may reduce mRNA stability.</text>
</comment>
<comment type="domain">
    <text evidence="1">When the BTB domain is lacking, AHR signaling induction promoted by IVNS1ABP is massively increased; Thus, the BTB domain inhibits AHR signaling induced by IVNS1ABP (By similarity). Dimerization is necessary for proper splicing activity of IVNS1ABP and this is mediated by the BTB domain (By similarity). The BACK domain is necessary for proper viral M mRNA export (By similarity).</text>
</comment>
<comment type="disruption phenotype">
    <text evidence="5">Mice develop normally with no gross abnormalities. However, they display marked sensitivity to doxorubicin cardiotoxicity with increased number of cardiomyocytes apoptosis. Analysis of hearts from knockout mice reveal vacuolization and edema of cardiomaycytes.</text>
</comment>
<comment type="miscellaneous">
    <text evidence="5">Transgenic mice overexpressing Ivns1abp develop normally with no gross abnormalities up to 7-month old. However, they display a marked resistance to the cardiotoxic effect of doxorubicin which is an anti-neoplastic agent known to affect actin skeleton and an effective drug for cancer therapy with cardiotoxicity as side effect. Overexpression of Ivns1abp in the heart protect cardiomyocytes from apoptosis and improved survival rate after doxorubicin injection.</text>
</comment>
<comment type="miscellaneous">
    <text>Disorganized actin skeleton is observed in cells transfected with isoform 2 (Nd1-S), which lacks the six kelch repeats.</text>
</comment>
<comment type="similarity">
    <text evidence="14">Belongs to the BTB-kelch protein family.</text>
</comment>
<comment type="sequence caution" evidence="14">
    <conflict type="erroneous initiation">
        <sequence resource="EMBL-CDS" id="BAC98039"/>
    </conflict>
</comment>
<protein>
    <recommendedName>
        <fullName>Influenza virus NS1A-binding protein homolog</fullName>
        <shortName>NS1-BP</shortName>
        <shortName>NS1-binding protein homolog</shortName>
    </recommendedName>
    <alternativeName>
        <fullName>Kelch family protein Nd1-L</fullName>
    </alternativeName>
    <alternativeName>
        <fullName>ND1-L2</fullName>
    </alternativeName>
    <alternativeName>
        <fullName>Nd1-S</fullName>
    </alternativeName>
</protein>
<feature type="chain" id="PRO_0000285078" description="Influenza virus NS1A-binding protein homolog">
    <location>
        <begin position="1"/>
        <end position="642"/>
    </location>
</feature>
<feature type="domain" description="BTB" evidence="2">
    <location>
        <begin position="32"/>
        <end position="99"/>
    </location>
</feature>
<feature type="domain" description="BACK">
    <location>
        <begin position="134"/>
        <end position="233"/>
    </location>
</feature>
<feature type="repeat" description="Kelch 1">
    <location>
        <begin position="369"/>
        <end position="415"/>
    </location>
</feature>
<feature type="repeat" description="Kelch 2">
    <location>
        <begin position="416"/>
        <end position="463"/>
    </location>
</feature>
<feature type="repeat" description="Kelch 3">
    <location>
        <begin position="465"/>
        <end position="512"/>
    </location>
</feature>
<feature type="repeat" description="Kelch 4">
    <location>
        <begin position="513"/>
        <end position="559"/>
    </location>
</feature>
<feature type="repeat" description="Kelch 5">
    <location>
        <begin position="561"/>
        <end position="606"/>
    </location>
</feature>
<feature type="repeat" description="Kelch 6">
    <location>
        <begin position="608"/>
        <end position="642"/>
    </location>
</feature>
<feature type="region of interest" description="Disordered" evidence="3">
    <location>
        <begin position="257"/>
        <end position="281"/>
    </location>
</feature>
<feature type="compositionally biased region" description="Polar residues" evidence="3">
    <location>
        <begin position="265"/>
        <end position="281"/>
    </location>
</feature>
<feature type="modified residue" description="Phosphoserine" evidence="16">
    <location>
        <position position="246"/>
    </location>
</feature>
<feature type="modified residue" description="Phosphoserine" evidence="1">
    <location>
        <position position="277"/>
    </location>
</feature>
<feature type="modified residue" description="Phosphoserine" evidence="16">
    <location>
        <position position="322"/>
    </location>
</feature>
<feature type="modified residue" description="Phosphoserine" evidence="1">
    <location>
        <position position="336"/>
    </location>
</feature>
<feature type="modified residue" description="Phosphoserine" evidence="1">
    <location>
        <position position="338"/>
    </location>
</feature>
<feature type="splice variant" id="VSP_024810" description="In isoform 4." evidence="12">
    <location>
        <begin position="178"/>
        <end position="219"/>
    </location>
</feature>
<feature type="splice variant" id="VSP_024811" description="In isoform 3." evidence="13">
    <location>
        <begin position="179"/>
        <end position="218"/>
    </location>
</feature>
<feature type="splice variant" id="VSP_024812" description="In isoform 2." evidence="10 11 12">
    <original>Q</original>
    <variation>Y</variation>
    <location>
        <position position="221"/>
    </location>
</feature>
<feature type="splice variant" id="VSP_024813" description="In isoform 2." evidence="10 11 12">
    <location>
        <begin position="222"/>
        <end position="642"/>
    </location>
</feature>
<feature type="sequence conflict" description="In Ref. 4; BAE26822." evidence="14" ref="4">
    <original>Y</original>
    <variation>H</variation>
    <location>
        <position position="106"/>
    </location>
</feature>
<feature type="sequence conflict" description="In Ref. 4; BAE34935." evidence="14" ref="4">
    <original>W</original>
    <variation>R</variation>
    <location>
        <position position="201"/>
    </location>
</feature>
<feature type="sequence conflict" description="In Ref. 4; BAE27084." evidence="14" ref="4">
    <original>P</original>
    <variation>T</variation>
    <location>
        <position position="285"/>
    </location>
</feature>
<feature type="sequence conflict" description="In Ref. 4; BAE27084." evidence="14" ref="4">
    <original>E</original>
    <variation>K</variation>
    <location>
        <position position="295"/>
    </location>
</feature>
<feature type="sequence conflict" description="In Ref. 5; AAH04092." evidence="14" ref="5">
    <original>P</original>
    <variation>S</variation>
    <location>
        <position position="544"/>
    </location>
</feature>
<feature type="sequence conflict" description="In Ref. 4; BAE27084." evidence="14" ref="4">
    <original>A</original>
    <variation>S</variation>
    <location>
        <position position="548"/>
    </location>
</feature>
<feature type="sequence conflict" description="In Ref. 1; BAB69058." evidence="14" ref="1">
    <original>R</original>
    <variation>K</variation>
    <location>
        <position position="549"/>
    </location>
</feature>
<feature type="sequence conflict" description="In Ref. 4; BAE27084." evidence="14" ref="4">
    <original>M</original>
    <variation>I</variation>
    <location>
        <position position="589"/>
    </location>
</feature>
<sequence length="642" mass="71581">MIPNGYLMFEDENFIESSVAKLNALRKSGQFCDVRLQVCGHEMLAHRAVLACCSPYLFEIFNSDSDPHGVSHVKLDDLNPEAVEVLLNYAYTAQLKADKELVKDVYSAAKKLKMDRVKQVCGDYLLSRMDVTSCISYRNFASCMGDSRLLNKVDAYIQEHLLQISEEEEFLKLPRLKLEVMLEDNVCLPSNGKLYTKVINWVQRSIWENGDSLEELMEEVQTLYYSADHKLLDGNPLDGQAEVFGSDDDHIQFVQKKPPRENGHKQISGSSTGCLSSPNASMQSPKHEWKIVASEKTSNNTYLCLAVLDSTFCVIFLHGRNSPQSSPTSTPKLSKSLSFEMQPDELLEKPMSPMQYARSGLGTAEMNGKLIAAGGYNREECLRTVECYDPHTDHWSFLAPMRTPRARFQMAVLMGQLYVVGGSNGHSDDLSCGEMYDPNIDDWTPVPELRTNRCNAGVCALNGKLYIVGGSDPYGQKGLKNCDVFDPVTKSWTSCAPLNIRRHQSAVCELGGYLYIIGGAESWNCLNTVERYNPENNTWTLIAPMNVARRGAGVAVLDGKLFVGGGFDGSHAISCVEMYDPTRNEWKMMGNMTSPRSNAGITTVGNTIYAVGGFDGNEFLNTVEVYNPQSNEWSPYTKIFQF</sequence>
<organism>
    <name type="scientific">Mus musculus</name>
    <name type="common">Mouse</name>
    <dbReference type="NCBI Taxonomy" id="10090"/>
    <lineage>
        <taxon>Eukaryota</taxon>
        <taxon>Metazoa</taxon>
        <taxon>Chordata</taxon>
        <taxon>Craniata</taxon>
        <taxon>Vertebrata</taxon>
        <taxon>Euteleostomi</taxon>
        <taxon>Mammalia</taxon>
        <taxon>Eutheria</taxon>
        <taxon>Euarchontoglires</taxon>
        <taxon>Glires</taxon>
        <taxon>Rodentia</taxon>
        <taxon>Myomorpha</taxon>
        <taxon>Muroidea</taxon>
        <taxon>Muridae</taxon>
        <taxon>Murinae</taxon>
        <taxon>Mus</taxon>
        <taxon>Mus</taxon>
    </lineage>
</organism>
<gene>
    <name evidence="15" type="primary">Ivns1abp</name>
    <name type="synonym">Kiaa0850</name>
    <name type="synonym">Nd1</name>
    <name type="synonym">Nd1L</name>
    <name type="synonym">Nd1S</name>
    <name type="synonym">Ns1</name>
    <name type="synonym">Ns1bp</name>
</gene>
<reference key="1">
    <citation type="journal article" date="2002" name="J. Biol. Chem.">
        <title>Identification of Nd1, a novel murine kelch family protein, involved in stabilization of actin filaments.</title>
        <authorList>
            <person name="Sasagawa K."/>
            <person name="Matsudo Y."/>
            <person name="Kang M."/>
            <person name="Fujimura L."/>
            <person name="Iitsuka Y."/>
            <person name="Okada S."/>
            <person name="Ochiai T."/>
            <person name="Tokuhisa T."/>
            <person name="Hatano M."/>
        </authorList>
    </citation>
    <scope>NUCLEOTIDE SEQUENCE [MRNA] (ISOFORMS 1 AND 2)</scope>
    <scope>FUNCTION</scope>
    <scope>SUBUNIT</scope>
    <scope>SUBCELLULAR LOCATION</scope>
    <scope>TISSUE SPECIFICITY</scope>
</reference>
<reference key="2">
    <citation type="submission" date="2006-08" db="EMBL/GenBank/DDBJ databases">
        <title>Identification of novel variants of gene Nd1 in mouse.</title>
        <authorList>
            <person name="Wang J."/>
            <person name="Xiao X."/>
        </authorList>
    </citation>
    <scope>NUCLEOTIDE SEQUENCE [MRNA] (ISOFORM 3)</scope>
    <source>
        <strain>KM</strain>
    </source>
</reference>
<reference key="3">
    <citation type="journal article" date="2003" name="DNA Res.">
        <title>Prediction of the coding sequences of mouse homologues of KIAA gene: III. The complete nucleotide sequences of 500 mouse KIAA-homologous cDNAs identified by screening of terminal sequences of cDNA clones randomly sampled from size-fractionated libraries.</title>
        <authorList>
            <person name="Okazaki N."/>
            <person name="Kikuno R."/>
            <person name="Ohara R."/>
            <person name="Inamoto S."/>
            <person name="Koseki H."/>
            <person name="Hiraoka S."/>
            <person name="Saga Y."/>
            <person name="Nagase T."/>
            <person name="Ohara O."/>
            <person name="Koga H."/>
        </authorList>
    </citation>
    <scope>NUCLEOTIDE SEQUENCE [LARGE SCALE MRNA] (ISOFORM 1)</scope>
    <source>
        <tissue>Embryonic tail</tissue>
    </source>
</reference>
<reference key="4">
    <citation type="journal article" date="2005" name="Science">
        <title>The transcriptional landscape of the mammalian genome.</title>
        <authorList>
            <person name="Carninci P."/>
            <person name="Kasukawa T."/>
            <person name="Katayama S."/>
            <person name="Gough J."/>
            <person name="Frith M.C."/>
            <person name="Maeda N."/>
            <person name="Oyama R."/>
            <person name="Ravasi T."/>
            <person name="Lenhard B."/>
            <person name="Wells C."/>
            <person name="Kodzius R."/>
            <person name="Shimokawa K."/>
            <person name="Bajic V.B."/>
            <person name="Brenner S.E."/>
            <person name="Batalov S."/>
            <person name="Forrest A.R."/>
            <person name="Zavolan M."/>
            <person name="Davis M.J."/>
            <person name="Wilming L.G."/>
            <person name="Aidinis V."/>
            <person name="Allen J.E."/>
            <person name="Ambesi-Impiombato A."/>
            <person name="Apweiler R."/>
            <person name="Aturaliya R.N."/>
            <person name="Bailey T.L."/>
            <person name="Bansal M."/>
            <person name="Baxter L."/>
            <person name="Beisel K.W."/>
            <person name="Bersano T."/>
            <person name="Bono H."/>
            <person name="Chalk A.M."/>
            <person name="Chiu K.P."/>
            <person name="Choudhary V."/>
            <person name="Christoffels A."/>
            <person name="Clutterbuck D.R."/>
            <person name="Crowe M.L."/>
            <person name="Dalla E."/>
            <person name="Dalrymple B.P."/>
            <person name="de Bono B."/>
            <person name="Della Gatta G."/>
            <person name="di Bernardo D."/>
            <person name="Down T."/>
            <person name="Engstrom P."/>
            <person name="Fagiolini M."/>
            <person name="Faulkner G."/>
            <person name="Fletcher C.F."/>
            <person name="Fukushima T."/>
            <person name="Furuno M."/>
            <person name="Futaki S."/>
            <person name="Gariboldi M."/>
            <person name="Georgii-Hemming P."/>
            <person name="Gingeras T.R."/>
            <person name="Gojobori T."/>
            <person name="Green R.E."/>
            <person name="Gustincich S."/>
            <person name="Harbers M."/>
            <person name="Hayashi Y."/>
            <person name="Hensch T.K."/>
            <person name="Hirokawa N."/>
            <person name="Hill D."/>
            <person name="Huminiecki L."/>
            <person name="Iacono M."/>
            <person name="Ikeo K."/>
            <person name="Iwama A."/>
            <person name="Ishikawa T."/>
            <person name="Jakt M."/>
            <person name="Kanapin A."/>
            <person name="Katoh M."/>
            <person name="Kawasawa Y."/>
            <person name="Kelso J."/>
            <person name="Kitamura H."/>
            <person name="Kitano H."/>
            <person name="Kollias G."/>
            <person name="Krishnan S.P."/>
            <person name="Kruger A."/>
            <person name="Kummerfeld S.K."/>
            <person name="Kurochkin I.V."/>
            <person name="Lareau L.F."/>
            <person name="Lazarevic D."/>
            <person name="Lipovich L."/>
            <person name="Liu J."/>
            <person name="Liuni S."/>
            <person name="McWilliam S."/>
            <person name="Madan Babu M."/>
            <person name="Madera M."/>
            <person name="Marchionni L."/>
            <person name="Matsuda H."/>
            <person name="Matsuzawa S."/>
            <person name="Miki H."/>
            <person name="Mignone F."/>
            <person name="Miyake S."/>
            <person name="Morris K."/>
            <person name="Mottagui-Tabar S."/>
            <person name="Mulder N."/>
            <person name="Nakano N."/>
            <person name="Nakauchi H."/>
            <person name="Ng P."/>
            <person name="Nilsson R."/>
            <person name="Nishiguchi S."/>
            <person name="Nishikawa S."/>
            <person name="Nori F."/>
            <person name="Ohara O."/>
            <person name="Okazaki Y."/>
            <person name="Orlando V."/>
            <person name="Pang K.C."/>
            <person name="Pavan W.J."/>
            <person name="Pavesi G."/>
            <person name="Pesole G."/>
            <person name="Petrovsky N."/>
            <person name="Piazza S."/>
            <person name="Reed J."/>
            <person name="Reid J.F."/>
            <person name="Ring B.Z."/>
            <person name="Ringwald M."/>
            <person name="Rost B."/>
            <person name="Ruan Y."/>
            <person name="Salzberg S.L."/>
            <person name="Sandelin A."/>
            <person name="Schneider C."/>
            <person name="Schoenbach C."/>
            <person name="Sekiguchi K."/>
            <person name="Semple C.A."/>
            <person name="Seno S."/>
            <person name="Sessa L."/>
            <person name="Sheng Y."/>
            <person name="Shibata Y."/>
            <person name="Shimada H."/>
            <person name="Shimada K."/>
            <person name="Silva D."/>
            <person name="Sinclair B."/>
            <person name="Sperling S."/>
            <person name="Stupka E."/>
            <person name="Sugiura K."/>
            <person name="Sultana R."/>
            <person name="Takenaka Y."/>
            <person name="Taki K."/>
            <person name="Tammoja K."/>
            <person name="Tan S.L."/>
            <person name="Tang S."/>
            <person name="Taylor M.S."/>
            <person name="Tegner J."/>
            <person name="Teichmann S.A."/>
            <person name="Ueda H.R."/>
            <person name="van Nimwegen E."/>
            <person name="Verardo R."/>
            <person name="Wei C.L."/>
            <person name="Yagi K."/>
            <person name="Yamanishi H."/>
            <person name="Zabarovsky E."/>
            <person name="Zhu S."/>
            <person name="Zimmer A."/>
            <person name="Hide W."/>
            <person name="Bult C."/>
            <person name="Grimmond S.M."/>
            <person name="Teasdale R.D."/>
            <person name="Liu E.T."/>
            <person name="Brusic V."/>
            <person name="Quackenbush J."/>
            <person name="Wahlestedt C."/>
            <person name="Mattick J.S."/>
            <person name="Hume D.A."/>
            <person name="Kai C."/>
            <person name="Sasaki D."/>
            <person name="Tomaru Y."/>
            <person name="Fukuda S."/>
            <person name="Kanamori-Katayama M."/>
            <person name="Suzuki M."/>
            <person name="Aoki J."/>
            <person name="Arakawa T."/>
            <person name="Iida J."/>
            <person name="Imamura K."/>
            <person name="Itoh M."/>
            <person name="Kato T."/>
            <person name="Kawaji H."/>
            <person name="Kawagashira N."/>
            <person name="Kawashima T."/>
            <person name="Kojima M."/>
            <person name="Kondo S."/>
            <person name="Konno H."/>
            <person name="Nakano K."/>
            <person name="Ninomiya N."/>
            <person name="Nishio T."/>
            <person name="Okada M."/>
            <person name="Plessy C."/>
            <person name="Shibata K."/>
            <person name="Shiraki T."/>
            <person name="Suzuki S."/>
            <person name="Tagami M."/>
            <person name="Waki K."/>
            <person name="Watahiki A."/>
            <person name="Okamura-Oho Y."/>
            <person name="Suzuki H."/>
            <person name="Kawai J."/>
            <person name="Hayashizaki Y."/>
        </authorList>
    </citation>
    <scope>NUCLEOTIDE SEQUENCE [LARGE SCALE MRNA] (ISOFORMS 1; 2 AND 4)</scope>
    <source>
        <strain>BALB/cJ</strain>
        <strain>C57BL/6J</strain>
        <tissue>Amnion</tissue>
        <tissue>Kidney</tissue>
        <tissue>Lung</tissue>
        <tissue>Mammary gland</tissue>
        <tissue>Placenta</tissue>
        <tissue>Testis</tissue>
    </source>
</reference>
<reference key="5">
    <citation type="journal article" date="2004" name="Genome Res.">
        <title>The status, quality, and expansion of the NIH full-length cDNA project: the Mammalian Gene Collection (MGC).</title>
        <authorList>
            <consortium name="The MGC Project Team"/>
        </authorList>
    </citation>
    <scope>NUCLEOTIDE SEQUENCE [LARGE SCALE MRNA] (ISOFORMS 1 AND 2)</scope>
    <source>
        <strain>FVB/N</strain>
        <tissue>Mammary tumor</tissue>
    </source>
</reference>
<reference key="6">
    <citation type="journal article" date="2001" name="Biochim. Biophys. Acta">
        <title>Nd1, a novel murine Kelch family protein, may play the role of a housekeeping gene.</title>
        <authorList>
            <person name="Kang M."/>
            <person name="Matsudo Y."/>
            <person name="Sasagawa K."/>
            <person name="Tokuhisa T."/>
            <person name="Hatano M."/>
        </authorList>
    </citation>
    <scope>GENOMIC ORGANIZATION</scope>
</reference>
<reference key="7">
    <citation type="journal article" date="2004" name="Cardiovasc. Res.">
        <title>Protective role of Nd1 in doxorubicin-induced cardiotoxicity.</title>
        <authorList>
            <person name="Fujimura L."/>
            <person name="Matsudo Y."/>
            <person name="Kang M."/>
            <person name="Takamori Y."/>
            <person name="Tokuhisa T."/>
            <person name="Hatano M."/>
        </authorList>
    </citation>
    <scope>DISRUPTION PHENOTYPE</scope>
</reference>
<reference key="8">
    <citation type="journal article" date="2005" name="DNA Cell Biol.">
        <title>Overexpression of Nd1-s, a variant form of new kelch family protein, perturbs the cell cycle progression of fibroblasts.</title>
        <authorList>
            <person name="Inoue A."/>
            <person name="Kang M."/>
            <person name="Fujimura L."/>
            <person name="Takamori Y."/>
            <person name="Sasagawa K."/>
            <person name="Itoh H."/>
            <person name="Tokuhisa T."/>
            <person name="Hatano M."/>
        </authorList>
    </citation>
    <scope>FUNCTION (ISOFORM 2)</scope>
    <scope>TISSUE SPECIFICITY</scope>
    <scope>SUBCELLULAR LOCATION (ISOFORM 2)</scope>
</reference>
<reference key="9">
    <citation type="journal article" date="2005" name="J. Cell Sci.">
        <title>TLS facilitates transport of mRNA encoding an actin-stabilizing protein to dendritic spines.</title>
        <authorList>
            <person name="Fujii R."/>
            <person name="Takumi T."/>
        </authorList>
    </citation>
    <scope>FUNCTION</scope>
    <scope>TISSUE SPECIFICITY</scope>
</reference>
<reference key="10">
    <citation type="journal article" date="2006" name="Int. J. Mol. Med.">
        <title>Expression of the Nd1 gene is down-regulated by doxorubicin at post-transcriptional level.</title>
        <authorList>
            <person name="Takamori Y."/>
            <person name="Matsudo Y."/>
            <person name="Fujimura L."/>
            <person name="Kang M."/>
            <person name="Harada Y."/>
            <person name="Moriya H."/>
            <person name="Tokuhisa T."/>
            <person name="Hatano M."/>
        </authorList>
    </citation>
    <scope>INDUCTION</scope>
</reference>
<reference key="11">
    <citation type="journal article" date="2006" name="Transgenic Res.">
        <title>Overexpression of Nd1, a novel Kelch family protein, in the heart of transgenic mice protects against doxorubicin-induced cardiomyopathy.</title>
        <authorList>
            <person name="Matsudo Y."/>
            <person name="Takamori Y."/>
            <person name="Fujimura L."/>
            <person name="Nishio S."/>
            <person name="Sasagawa K."/>
            <person name="Komuro I."/>
            <person name="Tokuhisa T."/>
            <person name="Hatano M."/>
        </authorList>
    </citation>
    <scope>TRANSGENIC MICE</scope>
    <scope>FUNCTION</scope>
    <scope>INDUCTION</scope>
    <scope>DEVELOPMENTAL STAGE</scope>
</reference>
<reference key="12">
    <citation type="journal article" date="2010" name="Cell">
        <title>A tissue-specific atlas of mouse protein phosphorylation and expression.</title>
        <authorList>
            <person name="Huttlin E.L."/>
            <person name="Jedrychowski M.P."/>
            <person name="Elias J.E."/>
            <person name="Goswami T."/>
            <person name="Rad R."/>
            <person name="Beausoleil S.A."/>
            <person name="Villen J."/>
            <person name="Haas W."/>
            <person name="Sowa M.E."/>
            <person name="Gygi S.P."/>
        </authorList>
    </citation>
    <scope>PHOSPHORYLATION [LARGE SCALE ANALYSIS] AT SER-246 AND SER-322</scope>
    <scope>IDENTIFICATION BY MASS SPECTROMETRY [LARGE SCALE ANALYSIS]</scope>
    <source>
        <tissue>Brain</tissue>
        <tissue>Brown adipose tissue</tissue>
        <tissue>Heart</tissue>
        <tissue>Kidney</tissue>
        <tissue>Liver</tissue>
        <tissue>Spleen</tissue>
        <tissue>Testis</tissue>
    </source>
</reference>